<organism>
    <name type="scientific">Salmonella typhi</name>
    <dbReference type="NCBI Taxonomy" id="90370"/>
    <lineage>
        <taxon>Bacteria</taxon>
        <taxon>Pseudomonadati</taxon>
        <taxon>Pseudomonadota</taxon>
        <taxon>Gammaproteobacteria</taxon>
        <taxon>Enterobacterales</taxon>
        <taxon>Enterobacteriaceae</taxon>
        <taxon>Salmonella</taxon>
    </lineage>
</organism>
<name>ENTD_SALTI</name>
<sequence>MLTSHFPLPFAGHRLHIVDFDASSFHEHDLLWLPHHDRLRSAGRKRKAEHLAGRIAAVHALREVGVRAVPGIGDKRQPLWPDGLFGSISHCASTALAVISRQRVGVDIEKIMSQHTATELAPSIIDSDERQILQASSLPFPLALTLAFSAKESVYKAFSDRVTLPGFDSAKITSLNATHISLHLLPAFAAMMAERTVRTEWFQRGNSVITLVSAITRFPHDRSAPASILSAIPR</sequence>
<reference key="1">
    <citation type="journal article" date="2001" name="Nature">
        <title>Complete genome sequence of a multiple drug resistant Salmonella enterica serovar Typhi CT18.</title>
        <authorList>
            <person name="Parkhill J."/>
            <person name="Dougan G."/>
            <person name="James K.D."/>
            <person name="Thomson N.R."/>
            <person name="Pickard D."/>
            <person name="Wain J."/>
            <person name="Churcher C.M."/>
            <person name="Mungall K.L."/>
            <person name="Bentley S.D."/>
            <person name="Holden M.T.G."/>
            <person name="Sebaihia M."/>
            <person name="Baker S."/>
            <person name="Basham D."/>
            <person name="Brooks K."/>
            <person name="Chillingworth T."/>
            <person name="Connerton P."/>
            <person name="Cronin A."/>
            <person name="Davis P."/>
            <person name="Davies R.M."/>
            <person name="Dowd L."/>
            <person name="White N."/>
            <person name="Farrar J."/>
            <person name="Feltwell T."/>
            <person name="Hamlin N."/>
            <person name="Haque A."/>
            <person name="Hien T.T."/>
            <person name="Holroyd S."/>
            <person name="Jagels K."/>
            <person name="Krogh A."/>
            <person name="Larsen T.S."/>
            <person name="Leather S."/>
            <person name="Moule S."/>
            <person name="O'Gaora P."/>
            <person name="Parry C."/>
            <person name="Quail M.A."/>
            <person name="Rutherford K.M."/>
            <person name="Simmonds M."/>
            <person name="Skelton J."/>
            <person name="Stevens K."/>
            <person name="Whitehead S."/>
            <person name="Barrell B.G."/>
        </authorList>
    </citation>
    <scope>NUCLEOTIDE SEQUENCE [LARGE SCALE GENOMIC DNA]</scope>
    <source>
        <strain>CT18</strain>
    </source>
</reference>
<reference key="2">
    <citation type="journal article" date="2003" name="J. Bacteriol.">
        <title>Comparative genomics of Salmonella enterica serovar Typhi strains Ty2 and CT18.</title>
        <authorList>
            <person name="Deng W."/>
            <person name="Liou S.-R."/>
            <person name="Plunkett G. III"/>
            <person name="Mayhew G.F."/>
            <person name="Rose D.J."/>
            <person name="Burland V."/>
            <person name="Kodoyianni V."/>
            <person name="Schwartz D.C."/>
            <person name="Blattner F.R."/>
        </authorList>
    </citation>
    <scope>NUCLEOTIDE SEQUENCE [LARGE SCALE GENOMIC DNA]</scope>
    <source>
        <strain>ATCC 700931 / Ty2</strain>
    </source>
</reference>
<accession>Q8Z8L9</accession>
<protein>
    <recommendedName>
        <fullName evidence="2">Enterobactin synthase component D</fullName>
    </recommendedName>
    <alternativeName>
        <fullName evidence="2">4'-phosphopantetheinyl transferase EntD</fullName>
        <ecNumber evidence="2">2.7.8.-</ecNumber>
    </alternativeName>
    <alternativeName>
        <fullName evidence="2">Enterochelin synthase D</fullName>
    </alternativeName>
</protein>
<feature type="chain" id="PRO_0000206072" description="Enterobactin synthase component D">
    <location>
        <begin position="1"/>
        <end position="234"/>
    </location>
</feature>
<feature type="binding site" evidence="1">
    <location>
        <position position="107"/>
    </location>
    <ligand>
        <name>Mg(2+)</name>
        <dbReference type="ChEBI" id="CHEBI:18420"/>
    </ligand>
</feature>
<feature type="binding site" evidence="1">
    <location>
        <position position="109"/>
    </location>
    <ligand>
        <name>Mg(2+)</name>
        <dbReference type="ChEBI" id="CHEBI:18420"/>
    </ligand>
</feature>
<feature type="binding site" evidence="1">
    <location>
        <position position="152"/>
    </location>
    <ligand>
        <name>Mg(2+)</name>
        <dbReference type="ChEBI" id="CHEBI:18420"/>
    </ligand>
</feature>
<gene>
    <name evidence="2" type="primary">entD</name>
    <name type="ordered locus">STY0627</name>
    <name type="ordered locus">t2284</name>
</gene>
<evidence type="ECO:0000250" key="1"/>
<evidence type="ECO:0000250" key="2">
    <source>
        <dbReference type="UniProtKB" id="P19925"/>
    </source>
</evidence>
<evidence type="ECO:0000250" key="3">
    <source>
        <dbReference type="UniProtKB" id="P24224"/>
    </source>
</evidence>
<keyword id="KW-0259">Enterobactin biosynthesis</keyword>
<keyword id="KW-0460">Magnesium</keyword>
<keyword id="KW-0472">Membrane</keyword>
<keyword id="KW-0479">Metal-binding</keyword>
<keyword id="KW-0808">Transferase</keyword>
<comment type="function">
    <text evidence="2">Involved in the biosynthesis of the siderophore enterobactin (enterochelin), which is a macrocyclic trimeric lactone of N-(2,3-dihydroxybenzoyl)-serine. The serine trilactone serves as a scaffolding for the three catechol functionalities that provide hexadentate coordination for the tightly ligated iron(2+) atoms. Plays an essential role in the assembly of the enterobactin by catalyzing the transfer of the 4'-phosphopantetheine (Ppant) moiety from coenzyme A to the apo-domains of both EntB (ArCP domain) and EntF (PCP domain) to yield their holo-forms which make them competent for the activation of 2,3-dihydroxybenzoate (DHB) and L-serine, respectively.</text>
</comment>
<comment type="catalytic activity">
    <reaction evidence="2">
        <text>apo-[aryl-carrier protein] + CoA = holo-[aryl-carrier protein] + adenosine 3',5'-bisphosphate + H(+)</text>
        <dbReference type="Rhea" id="RHEA:48404"/>
        <dbReference type="Rhea" id="RHEA-COMP:15903"/>
        <dbReference type="Rhea" id="RHEA-COMP:17557"/>
        <dbReference type="ChEBI" id="CHEBI:15378"/>
        <dbReference type="ChEBI" id="CHEBI:29999"/>
        <dbReference type="ChEBI" id="CHEBI:57287"/>
        <dbReference type="ChEBI" id="CHEBI:58343"/>
        <dbReference type="ChEBI" id="CHEBI:64479"/>
    </reaction>
</comment>
<comment type="catalytic activity">
    <reaction evidence="2">
        <text>apo-[peptidyl-carrier protein] + CoA = holo-[peptidyl-carrier protein] + adenosine 3',5'-bisphosphate + H(+)</text>
        <dbReference type="Rhea" id="RHEA:46228"/>
        <dbReference type="Rhea" id="RHEA-COMP:11479"/>
        <dbReference type="Rhea" id="RHEA-COMP:11480"/>
        <dbReference type="ChEBI" id="CHEBI:15378"/>
        <dbReference type="ChEBI" id="CHEBI:29999"/>
        <dbReference type="ChEBI" id="CHEBI:57287"/>
        <dbReference type="ChEBI" id="CHEBI:58343"/>
        <dbReference type="ChEBI" id="CHEBI:64479"/>
    </reaction>
</comment>
<comment type="cofactor">
    <cofactor evidence="3">
        <name>Mg(2+)</name>
        <dbReference type="ChEBI" id="CHEBI:18420"/>
    </cofactor>
</comment>
<comment type="pathway">
    <text evidence="2">Siderophore biosynthesis; enterobactin biosynthesis.</text>
</comment>
<comment type="subunit">
    <text evidence="2">EntB, EntD, EntE, and EntF form a multienzyme complex called enterobactin synthase.</text>
</comment>
<comment type="subcellular location">
    <subcellularLocation>
        <location evidence="2">Membrane</location>
    </subcellularLocation>
</comment>
<comment type="similarity">
    <text evidence="2">Belongs to the P-Pant transferase superfamily. EntD family.</text>
</comment>
<dbReference type="EC" id="2.7.8.-" evidence="2"/>
<dbReference type="EMBL" id="AL513382">
    <property type="protein sequence ID" value="CAD05060.1"/>
    <property type="molecule type" value="Genomic_DNA"/>
</dbReference>
<dbReference type="EMBL" id="AE014613">
    <property type="protein sequence ID" value="AAO69885.1"/>
    <property type="molecule type" value="Genomic_DNA"/>
</dbReference>
<dbReference type="RefSeq" id="NP_455161.1">
    <property type="nucleotide sequence ID" value="NC_003198.1"/>
</dbReference>
<dbReference type="RefSeq" id="WP_001681620.1">
    <property type="nucleotide sequence ID" value="NZ_WSUR01000008.1"/>
</dbReference>
<dbReference type="SMR" id="Q8Z8L9"/>
<dbReference type="STRING" id="220341.gene:17584641"/>
<dbReference type="KEGG" id="stt:t2284"/>
<dbReference type="KEGG" id="sty:STY0627"/>
<dbReference type="PATRIC" id="fig|220341.7.peg.628"/>
<dbReference type="eggNOG" id="COG2977">
    <property type="taxonomic scope" value="Bacteria"/>
</dbReference>
<dbReference type="HOGENOM" id="CLU_075076_1_0_6"/>
<dbReference type="OMA" id="WFGSISH"/>
<dbReference type="OrthoDB" id="8210607at2"/>
<dbReference type="UniPathway" id="UPA00017"/>
<dbReference type="Proteomes" id="UP000000541">
    <property type="component" value="Chromosome"/>
</dbReference>
<dbReference type="Proteomes" id="UP000002670">
    <property type="component" value="Chromosome"/>
</dbReference>
<dbReference type="GO" id="GO:0009366">
    <property type="term" value="C:enterobactin synthetase complex"/>
    <property type="evidence" value="ECO:0000250"/>
    <property type="project" value="UniProtKB"/>
</dbReference>
<dbReference type="GO" id="GO:0005886">
    <property type="term" value="C:plasma membrane"/>
    <property type="evidence" value="ECO:0000250"/>
    <property type="project" value="UniProtKB"/>
</dbReference>
<dbReference type="GO" id="GO:0008897">
    <property type="term" value="F:holo-[acyl-carrier-protein] synthase activity"/>
    <property type="evidence" value="ECO:0000250"/>
    <property type="project" value="UniProtKB"/>
</dbReference>
<dbReference type="GO" id="GO:0000287">
    <property type="term" value="F:magnesium ion binding"/>
    <property type="evidence" value="ECO:0007669"/>
    <property type="project" value="InterPro"/>
</dbReference>
<dbReference type="GO" id="GO:0009239">
    <property type="term" value="P:enterobactin biosynthetic process"/>
    <property type="evidence" value="ECO:0000250"/>
    <property type="project" value="UniProtKB"/>
</dbReference>
<dbReference type="FunFam" id="3.90.470.20:FF:000012">
    <property type="entry name" value="Enterobactin synthase component D"/>
    <property type="match status" value="1"/>
</dbReference>
<dbReference type="Gene3D" id="3.90.470.20">
    <property type="entry name" value="4'-phosphopantetheinyl transferase domain"/>
    <property type="match status" value="1"/>
</dbReference>
<dbReference type="InterPro" id="IPR008278">
    <property type="entry name" value="4-PPantetheinyl_Trfase_dom"/>
</dbReference>
<dbReference type="InterPro" id="IPR037143">
    <property type="entry name" value="4-PPantetheinyl_Trfase_dom_sf"/>
</dbReference>
<dbReference type="InterPro" id="IPR041354">
    <property type="entry name" value="4PPT_N"/>
</dbReference>
<dbReference type="InterPro" id="IPR003542">
    <property type="entry name" value="Enbac_synth_compD-like"/>
</dbReference>
<dbReference type="NCBIfam" id="NF007604">
    <property type="entry name" value="PRK10251.1"/>
    <property type="match status" value="1"/>
</dbReference>
<dbReference type="PANTHER" id="PTHR38096">
    <property type="entry name" value="ENTEROBACTIN SYNTHASE COMPONENT D"/>
    <property type="match status" value="1"/>
</dbReference>
<dbReference type="PANTHER" id="PTHR38096:SF1">
    <property type="entry name" value="ENTEROBACTIN SYNTHASE COMPONENT D"/>
    <property type="match status" value="1"/>
</dbReference>
<dbReference type="Pfam" id="PF17837">
    <property type="entry name" value="4PPT_N"/>
    <property type="match status" value="1"/>
</dbReference>
<dbReference type="Pfam" id="PF01648">
    <property type="entry name" value="ACPS"/>
    <property type="match status" value="1"/>
</dbReference>
<dbReference type="PRINTS" id="PR01399">
    <property type="entry name" value="ENTSNTHTASED"/>
</dbReference>
<dbReference type="SUPFAM" id="SSF56214">
    <property type="entry name" value="4'-phosphopantetheinyl transferase"/>
    <property type="match status" value="1"/>
</dbReference>
<proteinExistence type="inferred from homology"/>